<keyword id="KW-0028">Amino-acid biosynthesis</keyword>
<keyword id="KW-0170">Cobalt</keyword>
<keyword id="KW-0220">Diaminopimelate biosynthesis</keyword>
<keyword id="KW-0378">Hydrolase</keyword>
<keyword id="KW-0457">Lysine biosynthesis</keyword>
<keyword id="KW-0479">Metal-binding</keyword>
<keyword id="KW-1185">Reference proteome</keyword>
<keyword id="KW-0862">Zinc</keyword>
<accession>A9AHS8</accession>
<proteinExistence type="inferred from homology"/>
<sequence length="379" mass="40989">MSATLALTEQLIARASVTPDDQHCQQIMTERLAALGFDCETVASHGVTNLWAVKRGTDGRDGKLLAFAGHTDVVPTGPLEQWTSPPFVPAHRDGKLYGRGAADMKTSLAAFVVAAEEFVAAHPDHRGAIAFLITSDEEGPATDGTVKVVELLESRGERLDYCIVGEPTSTAELGDVVKNGRRGSMSGELIVKGVQGHIAYPHLAKNPIHLLAPALAELAAEQWDEGNEYFPPTTWQVSNLRAGTGATNVIPGHADLLFNFRFSTASTVEGLQARVHAILDKHQLDYTLKWTVSGLPFLTPRGELSNALEHAIRAETGLTTELSTTGGTSDGRFIARICPQVIEFGPPNGSIHKIDEHIEVRFVEPLKNVYRRVLEQLIA</sequence>
<protein>
    <recommendedName>
        <fullName evidence="1">Succinyl-diaminopimelate desuccinylase</fullName>
        <shortName evidence="1">SDAP desuccinylase</shortName>
        <ecNumber evidence="1">3.5.1.18</ecNumber>
    </recommendedName>
    <alternativeName>
        <fullName evidence="1">N-succinyl-LL-2,6-diaminoheptanedioate amidohydrolase</fullName>
    </alternativeName>
</protein>
<feature type="chain" id="PRO_0000375505" description="Succinyl-diaminopimelate desuccinylase">
    <location>
        <begin position="1"/>
        <end position="379"/>
    </location>
</feature>
<feature type="active site" evidence="1">
    <location>
        <position position="72"/>
    </location>
</feature>
<feature type="active site" description="Proton acceptor" evidence="1">
    <location>
        <position position="137"/>
    </location>
</feature>
<feature type="binding site" evidence="1">
    <location>
        <position position="70"/>
    </location>
    <ligand>
        <name>Zn(2+)</name>
        <dbReference type="ChEBI" id="CHEBI:29105"/>
        <label>1</label>
    </ligand>
</feature>
<feature type="binding site" evidence="1">
    <location>
        <position position="103"/>
    </location>
    <ligand>
        <name>Zn(2+)</name>
        <dbReference type="ChEBI" id="CHEBI:29105"/>
        <label>1</label>
    </ligand>
</feature>
<feature type="binding site" evidence="1">
    <location>
        <position position="103"/>
    </location>
    <ligand>
        <name>Zn(2+)</name>
        <dbReference type="ChEBI" id="CHEBI:29105"/>
        <label>2</label>
    </ligand>
</feature>
<feature type="binding site" evidence="1">
    <location>
        <position position="138"/>
    </location>
    <ligand>
        <name>Zn(2+)</name>
        <dbReference type="ChEBI" id="CHEBI:29105"/>
        <label>2</label>
    </ligand>
</feature>
<feature type="binding site" evidence="1">
    <location>
        <position position="166"/>
    </location>
    <ligand>
        <name>Zn(2+)</name>
        <dbReference type="ChEBI" id="CHEBI:29105"/>
        <label>1</label>
    </ligand>
</feature>
<feature type="binding site" evidence="1">
    <location>
        <position position="352"/>
    </location>
    <ligand>
        <name>Zn(2+)</name>
        <dbReference type="ChEBI" id="CHEBI:29105"/>
        <label>2</label>
    </ligand>
</feature>
<name>DAPE_BURM1</name>
<comment type="function">
    <text evidence="1">Catalyzes the hydrolysis of N-succinyl-L,L-diaminopimelic acid (SDAP), forming succinate and LL-2,6-diaminopimelate (DAP), an intermediate involved in the bacterial biosynthesis of lysine and meso-diaminopimelic acid, an essential component of bacterial cell walls.</text>
</comment>
<comment type="catalytic activity">
    <reaction evidence="1">
        <text>N-succinyl-(2S,6S)-2,6-diaminopimelate + H2O = (2S,6S)-2,6-diaminopimelate + succinate</text>
        <dbReference type="Rhea" id="RHEA:22608"/>
        <dbReference type="ChEBI" id="CHEBI:15377"/>
        <dbReference type="ChEBI" id="CHEBI:30031"/>
        <dbReference type="ChEBI" id="CHEBI:57609"/>
        <dbReference type="ChEBI" id="CHEBI:58087"/>
        <dbReference type="EC" id="3.5.1.18"/>
    </reaction>
</comment>
<comment type="cofactor">
    <cofactor evidence="1">
        <name>Zn(2+)</name>
        <dbReference type="ChEBI" id="CHEBI:29105"/>
    </cofactor>
    <cofactor evidence="1">
        <name>Co(2+)</name>
        <dbReference type="ChEBI" id="CHEBI:48828"/>
    </cofactor>
    <text evidence="1">Binds 2 Zn(2+) or Co(2+) ions per subunit.</text>
</comment>
<comment type="pathway">
    <text evidence="1">Amino-acid biosynthesis; L-lysine biosynthesis via DAP pathway; LL-2,6-diaminopimelate from (S)-tetrahydrodipicolinate (succinylase route): step 3/3.</text>
</comment>
<comment type="subunit">
    <text evidence="1">Homodimer.</text>
</comment>
<comment type="similarity">
    <text evidence="1">Belongs to the peptidase M20A family. DapE subfamily.</text>
</comment>
<dbReference type="EC" id="3.5.1.18" evidence="1"/>
<dbReference type="EMBL" id="CP000868">
    <property type="protein sequence ID" value="ABX14933.1"/>
    <property type="molecule type" value="Genomic_DNA"/>
</dbReference>
<dbReference type="EMBL" id="AP009385">
    <property type="protein sequence ID" value="BAG43919.1"/>
    <property type="molecule type" value="Genomic_DNA"/>
</dbReference>
<dbReference type="RefSeq" id="WP_006412849.1">
    <property type="nucleotide sequence ID" value="NC_010084.1"/>
</dbReference>
<dbReference type="SMR" id="A9AHS8"/>
<dbReference type="STRING" id="395019.BMULJ_02002"/>
<dbReference type="GeneID" id="89570479"/>
<dbReference type="KEGG" id="bmj:BMULJ_02002"/>
<dbReference type="KEGG" id="bmu:Bmul_1245"/>
<dbReference type="eggNOG" id="COG0624">
    <property type="taxonomic scope" value="Bacteria"/>
</dbReference>
<dbReference type="HOGENOM" id="CLU_021802_4_0_4"/>
<dbReference type="UniPathway" id="UPA00034">
    <property type="reaction ID" value="UER00021"/>
</dbReference>
<dbReference type="Proteomes" id="UP000008815">
    <property type="component" value="Chromosome 1"/>
</dbReference>
<dbReference type="GO" id="GO:0008777">
    <property type="term" value="F:acetylornithine deacetylase activity"/>
    <property type="evidence" value="ECO:0007669"/>
    <property type="project" value="TreeGrafter"/>
</dbReference>
<dbReference type="GO" id="GO:0050897">
    <property type="term" value="F:cobalt ion binding"/>
    <property type="evidence" value="ECO:0007669"/>
    <property type="project" value="UniProtKB-UniRule"/>
</dbReference>
<dbReference type="GO" id="GO:0009014">
    <property type="term" value="F:succinyl-diaminopimelate desuccinylase activity"/>
    <property type="evidence" value="ECO:0007669"/>
    <property type="project" value="UniProtKB-UniRule"/>
</dbReference>
<dbReference type="GO" id="GO:0008270">
    <property type="term" value="F:zinc ion binding"/>
    <property type="evidence" value="ECO:0007669"/>
    <property type="project" value="UniProtKB-UniRule"/>
</dbReference>
<dbReference type="GO" id="GO:0019877">
    <property type="term" value="P:diaminopimelate biosynthetic process"/>
    <property type="evidence" value="ECO:0007669"/>
    <property type="project" value="UniProtKB-UniRule"/>
</dbReference>
<dbReference type="GO" id="GO:0006526">
    <property type="term" value="P:L-arginine biosynthetic process"/>
    <property type="evidence" value="ECO:0007669"/>
    <property type="project" value="TreeGrafter"/>
</dbReference>
<dbReference type="GO" id="GO:0009089">
    <property type="term" value="P:lysine biosynthetic process via diaminopimelate"/>
    <property type="evidence" value="ECO:0007669"/>
    <property type="project" value="UniProtKB-UniRule"/>
</dbReference>
<dbReference type="CDD" id="cd03891">
    <property type="entry name" value="M20_DapE_proteobac"/>
    <property type="match status" value="1"/>
</dbReference>
<dbReference type="FunFam" id="3.30.70.360:FF:000011">
    <property type="entry name" value="Succinyl-diaminopimelate desuccinylase"/>
    <property type="match status" value="1"/>
</dbReference>
<dbReference type="FunFam" id="3.40.630.10:FF:000005">
    <property type="entry name" value="Succinyl-diaminopimelate desuccinylase"/>
    <property type="match status" value="1"/>
</dbReference>
<dbReference type="Gene3D" id="3.40.630.10">
    <property type="entry name" value="Zn peptidases"/>
    <property type="match status" value="2"/>
</dbReference>
<dbReference type="HAMAP" id="MF_01690">
    <property type="entry name" value="DapE"/>
    <property type="match status" value="1"/>
</dbReference>
<dbReference type="InterPro" id="IPR001261">
    <property type="entry name" value="ArgE/DapE_CS"/>
</dbReference>
<dbReference type="InterPro" id="IPR036264">
    <property type="entry name" value="Bact_exopeptidase_dim_dom"/>
</dbReference>
<dbReference type="InterPro" id="IPR005941">
    <property type="entry name" value="DapE_proteobac"/>
</dbReference>
<dbReference type="InterPro" id="IPR002933">
    <property type="entry name" value="Peptidase_M20"/>
</dbReference>
<dbReference type="InterPro" id="IPR011650">
    <property type="entry name" value="Peptidase_M20_dimer"/>
</dbReference>
<dbReference type="InterPro" id="IPR050072">
    <property type="entry name" value="Peptidase_M20A"/>
</dbReference>
<dbReference type="NCBIfam" id="TIGR01246">
    <property type="entry name" value="dapE_proteo"/>
    <property type="match status" value="1"/>
</dbReference>
<dbReference type="NCBIfam" id="NF009557">
    <property type="entry name" value="PRK13009.1"/>
    <property type="match status" value="1"/>
</dbReference>
<dbReference type="PANTHER" id="PTHR43808">
    <property type="entry name" value="ACETYLORNITHINE DEACETYLASE"/>
    <property type="match status" value="1"/>
</dbReference>
<dbReference type="PANTHER" id="PTHR43808:SF31">
    <property type="entry name" value="N-ACETYL-L-CITRULLINE DEACETYLASE"/>
    <property type="match status" value="1"/>
</dbReference>
<dbReference type="Pfam" id="PF07687">
    <property type="entry name" value="M20_dimer"/>
    <property type="match status" value="1"/>
</dbReference>
<dbReference type="Pfam" id="PF01546">
    <property type="entry name" value="Peptidase_M20"/>
    <property type="match status" value="1"/>
</dbReference>
<dbReference type="SUPFAM" id="SSF55031">
    <property type="entry name" value="Bacterial exopeptidase dimerisation domain"/>
    <property type="match status" value="1"/>
</dbReference>
<dbReference type="SUPFAM" id="SSF53187">
    <property type="entry name" value="Zn-dependent exopeptidases"/>
    <property type="match status" value="1"/>
</dbReference>
<dbReference type="PROSITE" id="PS00758">
    <property type="entry name" value="ARGE_DAPE_CPG2_1"/>
    <property type="match status" value="1"/>
</dbReference>
<gene>
    <name evidence="1" type="primary">dapE</name>
    <name type="ordered locus">Bmul_1245</name>
    <name type="ordered locus">BMULJ_02002</name>
</gene>
<organism>
    <name type="scientific">Burkholderia multivorans (strain ATCC 17616 / 249)</name>
    <dbReference type="NCBI Taxonomy" id="395019"/>
    <lineage>
        <taxon>Bacteria</taxon>
        <taxon>Pseudomonadati</taxon>
        <taxon>Pseudomonadota</taxon>
        <taxon>Betaproteobacteria</taxon>
        <taxon>Burkholderiales</taxon>
        <taxon>Burkholderiaceae</taxon>
        <taxon>Burkholderia</taxon>
        <taxon>Burkholderia cepacia complex</taxon>
    </lineage>
</organism>
<evidence type="ECO:0000255" key="1">
    <source>
        <dbReference type="HAMAP-Rule" id="MF_01690"/>
    </source>
</evidence>
<reference key="1">
    <citation type="submission" date="2007-10" db="EMBL/GenBank/DDBJ databases">
        <title>Complete sequence of chromosome 1 of Burkholderia multivorans ATCC 17616.</title>
        <authorList>
            <person name="Copeland A."/>
            <person name="Lucas S."/>
            <person name="Lapidus A."/>
            <person name="Barry K."/>
            <person name="Glavina del Rio T."/>
            <person name="Dalin E."/>
            <person name="Tice H."/>
            <person name="Pitluck S."/>
            <person name="Chain P."/>
            <person name="Malfatti S."/>
            <person name="Shin M."/>
            <person name="Vergez L."/>
            <person name="Schmutz J."/>
            <person name="Larimer F."/>
            <person name="Land M."/>
            <person name="Hauser L."/>
            <person name="Kyrpides N."/>
            <person name="Kim E."/>
            <person name="Tiedje J."/>
            <person name="Richardson P."/>
        </authorList>
    </citation>
    <scope>NUCLEOTIDE SEQUENCE [LARGE SCALE GENOMIC DNA]</scope>
    <source>
        <strain>ATCC 17616 / 249</strain>
    </source>
</reference>
<reference key="2">
    <citation type="submission" date="2007-04" db="EMBL/GenBank/DDBJ databases">
        <title>Complete genome sequence of Burkholderia multivorans ATCC 17616.</title>
        <authorList>
            <person name="Ohtsubo Y."/>
            <person name="Yamashita A."/>
            <person name="Kurokawa K."/>
            <person name="Takami H."/>
            <person name="Yuhara S."/>
            <person name="Nishiyama E."/>
            <person name="Endo R."/>
            <person name="Miyazaki R."/>
            <person name="Ono A."/>
            <person name="Yano K."/>
            <person name="Ito M."/>
            <person name="Sota M."/>
            <person name="Yuji N."/>
            <person name="Hattori M."/>
            <person name="Tsuda M."/>
        </authorList>
    </citation>
    <scope>NUCLEOTIDE SEQUENCE [LARGE SCALE GENOMIC DNA]</scope>
    <source>
        <strain>ATCC 17616 / 249</strain>
    </source>
</reference>